<comment type="function">
    <text evidence="1">Proton-coupled chloride transporter. Functions as antiport system and exchanges two chloride ions for 1 proton. Probably acts as an electrical shunt for an outwardly-directed proton pump that is linked to amino acid decarboxylation, as part of the extreme acid resistance (XAR) response.</text>
</comment>
<comment type="catalytic activity">
    <reaction evidence="1">
        <text>2 chloride(in) + H(+)(out) = 2 chloride(out) + H(+)(in)</text>
        <dbReference type="Rhea" id="RHEA:29567"/>
        <dbReference type="ChEBI" id="CHEBI:15378"/>
        <dbReference type="ChEBI" id="CHEBI:17996"/>
    </reaction>
</comment>
<comment type="subunit">
    <text evidence="1">Homodimer.</text>
</comment>
<comment type="subcellular location">
    <subcellularLocation>
        <location evidence="1">Cell inner membrane</location>
        <topology evidence="1">Multi-pass membrane protein</topology>
    </subcellularLocation>
</comment>
<comment type="similarity">
    <text evidence="1">Belongs to the chloride channel (TC 2.A.49) family. ClcA subfamily.</text>
</comment>
<proteinExistence type="evidence at protein level"/>
<accession>Q3Z5K2</accession>
<sequence length="473" mass="50349">MKTDTPSLETPQAARLRRRQLIRQLLERDKTPLAILFMAAVVGTLVGLAAVAFDKGVAWLQNQRMGALVHTADNYPLLLTVAFLCSAVLAMFGYFLVRKYAPEAGGSGIPEIEGALEDQRPVRWWRVLPVKFFGGLGTLGGGMVLGREGPTVQIGGNIGRMVLDIFRLKGDEARHTLLATGAAAGLAAAFNAPLAGILFIIEEMRPQFRYTLISIKAVFIGVIMSTIMYRIFNHEVALIDVGKLSDAPLNTLWLYLILGIIFGIFGPIFNKWVLGMQDLLHRVHGGNITKWVLMGGAIGGLCGLLGFVAPATSGGGFNLIPIATAGNFSMGMLVFIFVARVITTLLCFSSGAPGGIFAPMLALGTVLGTAFGMVAVELFPQYHLEAGTFAIAGMGALLAASIRAPLTGIILVLEMTDNYQLILPMIITGLGATLLAQFTGGKPLYSAILARTLAKQEAEQLARSKAASASENT</sequence>
<reference key="1">
    <citation type="journal article" date="2005" name="Nucleic Acids Res.">
        <title>Genome dynamics and diversity of Shigella species, the etiologic agents of bacillary dysentery.</title>
        <authorList>
            <person name="Yang F."/>
            <person name="Yang J."/>
            <person name="Zhang X."/>
            <person name="Chen L."/>
            <person name="Jiang Y."/>
            <person name="Yan Y."/>
            <person name="Tang X."/>
            <person name="Wang J."/>
            <person name="Xiong Z."/>
            <person name="Dong J."/>
            <person name="Xue Y."/>
            <person name="Zhu Y."/>
            <person name="Xu X."/>
            <person name="Sun L."/>
            <person name="Chen S."/>
            <person name="Nie H."/>
            <person name="Peng J."/>
            <person name="Xu J."/>
            <person name="Wang Y."/>
            <person name="Yuan Z."/>
            <person name="Wen Y."/>
            <person name="Yao Z."/>
            <person name="Shen Y."/>
            <person name="Qiang B."/>
            <person name="Hou Y."/>
            <person name="Yu J."/>
            <person name="Jin Q."/>
        </authorList>
    </citation>
    <scope>NUCLEOTIDE SEQUENCE [LARGE SCALE GENOMIC DNA]</scope>
    <source>
        <strain>Ss046</strain>
    </source>
</reference>
<organism>
    <name type="scientific">Shigella sonnei (strain Ss046)</name>
    <dbReference type="NCBI Taxonomy" id="300269"/>
    <lineage>
        <taxon>Bacteria</taxon>
        <taxon>Pseudomonadati</taxon>
        <taxon>Pseudomonadota</taxon>
        <taxon>Gammaproteobacteria</taxon>
        <taxon>Enterobacterales</taxon>
        <taxon>Enterobacteriaceae</taxon>
        <taxon>Shigella</taxon>
    </lineage>
</organism>
<keyword id="KW-0002">3D-structure</keyword>
<keyword id="KW-0050">Antiport</keyword>
<keyword id="KW-0997">Cell inner membrane</keyword>
<keyword id="KW-1003">Cell membrane</keyword>
<keyword id="KW-0868">Chloride</keyword>
<keyword id="KW-0406">Ion transport</keyword>
<keyword id="KW-0472">Membrane</keyword>
<keyword id="KW-1185">Reference proteome</keyword>
<keyword id="KW-0812">Transmembrane</keyword>
<keyword id="KW-1133">Transmembrane helix</keyword>
<keyword id="KW-0813">Transport</keyword>
<gene>
    <name evidence="1" type="primary">clcA</name>
    <name evidence="1" type="synonym">eriC</name>
    <name type="ordered locus">SSON_0167</name>
</gene>
<evidence type="ECO:0000255" key="1">
    <source>
        <dbReference type="HAMAP-Rule" id="MF_01128"/>
    </source>
</evidence>
<evidence type="ECO:0007829" key="2">
    <source>
        <dbReference type="PDB" id="4FG6"/>
    </source>
</evidence>
<feature type="chain" id="PRO_0000301545" description="H(+)/Cl(-) exchange transporter ClcA">
    <location>
        <begin position="1"/>
        <end position="473"/>
    </location>
</feature>
<feature type="topological domain" description="Cytoplasmic" evidence="1">
    <location>
        <begin position="1"/>
        <end position="32"/>
    </location>
</feature>
<feature type="transmembrane region" description="Helical" evidence="1">
    <location>
        <begin position="33"/>
        <end position="69"/>
    </location>
</feature>
<feature type="topological domain" description="Periplasmic" evidence="1">
    <location>
        <begin position="70"/>
        <end position="76"/>
    </location>
</feature>
<feature type="transmembrane region" description="Helical" evidence="1">
    <location>
        <begin position="77"/>
        <end position="100"/>
    </location>
</feature>
<feature type="intramembrane region" description="Helical" evidence="1">
    <location>
        <begin position="109"/>
        <end position="116"/>
    </location>
</feature>
<feature type="topological domain" description="Cytoplasmic" evidence="1">
    <location>
        <begin position="117"/>
        <end position="123"/>
    </location>
</feature>
<feature type="transmembrane region" description="Helical" evidence="1">
    <location>
        <begin position="124"/>
        <end position="141"/>
    </location>
</feature>
<feature type="transmembrane region" description="Helical" evidence="1">
    <location>
        <begin position="148"/>
        <end position="166"/>
    </location>
</feature>
<feature type="topological domain" description="Cytoplasmic" evidence="1">
    <location>
        <begin position="167"/>
        <end position="176"/>
    </location>
</feature>
<feature type="intramembrane region" description="Helical" evidence="1">
    <location>
        <begin position="177"/>
        <end position="189"/>
    </location>
</feature>
<feature type="intramembrane region" description="Helical" evidence="1">
    <location>
        <begin position="193"/>
        <end position="201"/>
    </location>
</feature>
<feature type="topological domain" description="Cytoplasmic" evidence="1">
    <location>
        <begin position="202"/>
        <end position="214"/>
    </location>
</feature>
<feature type="transmembrane region" description="Helical" evidence="1">
    <location>
        <begin position="215"/>
        <end position="232"/>
    </location>
</feature>
<feature type="topological domain" description="Periplasmic" evidence="1">
    <location>
        <begin position="233"/>
        <end position="252"/>
    </location>
</feature>
<feature type="transmembrane region" description="Helical" evidence="1">
    <location>
        <begin position="253"/>
        <end position="281"/>
    </location>
</feature>
<feature type="topological domain" description="Cytoplasmic" evidence="1">
    <location>
        <begin position="282"/>
        <end position="287"/>
    </location>
</feature>
<feature type="transmembrane region" description="Helical" evidence="1">
    <location>
        <begin position="288"/>
        <end position="309"/>
    </location>
</feature>
<feature type="topological domain" description="Periplasmic" evidence="1">
    <location>
        <begin position="310"/>
        <end position="329"/>
    </location>
</feature>
<feature type="transmembrane region" description="Helical" evidence="1">
    <location>
        <begin position="330"/>
        <end position="349"/>
    </location>
</feature>
<feature type="transmembrane region" description="Helical" evidence="1">
    <location>
        <begin position="355"/>
        <end position="376"/>
    </location>
</feature>
<feature type="topological domain" description="Periplasmic" evidence="1">
    <location>
        <begin position="377"/>
        <end position="386"/>
    </location>
</feature>
<feature type="intramembrane region" description="Helical" evidence="1">
    <location>
        <begin position="387"/>
        <end position="401"/>
    </location>
</feature>
<feature type="intramembrane region" description="Note=Loop between two helices" evidence="1">
    <location>
        <begin position="402"/>
        <end position="404"/>
    </location>
</feature>
<feature type="intramembrane region" description="Helical" evidence="1">
    <location>
        <begin position="405"/>
        <end position="416"/>
    </location>
</feature>
<feature type="intramembrane region" description="Note=Loop between two helices" evidence="1">
    <location>
        <begin position="417"/>
        <end position="421"/>
    </location>
</feature>
<feature type="transmembrane region" description="Helical" evidence="1">
    <location>
        <begin position="422"/>
        <end position="438"/>
    </location>
</feature>
<feature type="topological domain" description="Cytoplasmic" evidence="1">
    <location>
        <begin position="439"/>
        <end position="473"/>
    </location>
</feature>
<feature type="short sequence motif" description="Selectivity filter part_1" evidence="1">
    <location>
        <begin position="106"/>
        <end position="110"/>
    </location>
</feature>
<feature type="short sequence motif" description="Selectivity filter part_2" evidence="1">
    <location>
        <begin position="146"/>
        <end position="150"/>
    </location>
</feature>
<feature type="short sequence motif" description="Selectivity filter part_3" evidence="1">
    <location>
        <begin position="355"/>
        <end position="359"/>
    </location>
</feature>
<feature type="binding site" evidence="1">
    <location>
        <position position="107"/>
    </location>
    <ligand>
        <name>chloride</name>
        <dbReference type="ChEBI" id="CHEBI:17996"/>
    </ligand>
</feature>
<feature type="binding site" evidence="1">
    <location>
        <position position="356"/>
    </location>
    <ligand>
        <name>chloride</name>
        <dbReference type="ChEBI" id="CHEBI:17996"/>
    </ligand>
</feature>
<feature type="binding site" evidence="1">
    <location>
        <position position="357"/>
    </location>
    <ligand>
        <name>chloride</name>
        <dbReference type="ChEBI" id="CHEBI:17996"/>
    </ligand>
</feature>
<feature type="binding site" evidence="1">
    <location>
        <position position="445"/>
    </location>
    <ligand>
        <name>chloride</name>
        <dbReference type="ChEBI" id="CHEBI:17996"/>
    </ligand>
</feature>
<feature type="site" description="Mediates proton transfer from the outer aqueous phase to the interior of the protein; involved in linking H(+) and Cl(-) transport" evidence="1">
    <location>
        <position position="148"/>
    </location>
</feature>
<feature type="site" description="Mediates proton transfer from the protein to the inner aqueous phase" evidence="1">
    <location>
        <position position="203"/>
    </location>
</feature>
<feature type="helix" evidence="2">
    <location>
        <begin position="18"/>
        <end position="26"/>
    </location>
</feature>
<feature type="helix" evidence="2">
    <location>
        <begin position="33"/>
        <end position="70"/>
    </location>
</feature>
<feature type="helix" evidence="2">
    <location>
        <begin position="75"/>
        <end position="99"/>
    </location>
</feature>
<feature type="helix" evidence="2">
    <location>
        <begin position="102"/>
        <end position="104"/>
    </location>
</feature>
<feature type="helix" evidence="2">
    <location>
        <begin position="109"/>
        <end position="116"/>
    </location>
</feature>
<feature type="helix" evidence="2">
    <location>
        <begin position="124"/>
        <end position="140"/>
    </location>
</feature>
<feature type="helix" evidence="2">
    <location>
        <begin position="148"/>
        <end position="165"/>
    </location>
</feature>
<feature type="helix" evidence="2">
    <location>
        <begin position="171"/>
        <end position="190"/>
    </location>
</feature>
<feature type="helix" evidence="2">
    <location>
        <begin position="193"/>
        <end position="200"/>
    </location>
</feature>
<feature type="turn" evidence="2">
    <location>
        <begin position="201"/>
        <end position="204"/>
    </location>
</feature>
<feature type="strand" evidence="2">
    <location>
        <begin position="207"/>
        <end position="209"/>
    </location>
</feature>
<feature type="helix" evidence="2">
    <location>
        <begin position="215"/>
        <end position="232"/>
    </location>
</feature>
<feature type="helix" evidence="2">
    <location>
        <begin position="249"/>
        <end position="251"/>
    </location>
</feature>
<feature type="helix" evidence="2">
    <location>
        <begin position="252"/>
        <end position="284"/>
    </location>
</feature>
<feature type="helix" evidence="2">
    <location>
        <begin position="288"/>
        <end position="308"/>
    </location>
</feature>
<feature type="helix" evidence="2">
    <location>
        <begin position="310"/>
        <end position="312"/>
    </location>
</feature>
<feature type="helix" evidence="2">
    <location>
        <begin position="319"/>
        <end position="325"/>
    </location>
</feature>
<feature type="helix" evidence="2">
    <location>
        <begin position="330"/>
        <end position="349"/>
    </location>
</feature>
<feature type="helix" evidence="2">
    <location>
        <begin position="357"/>
        <end position="378"/>
    </location>
</feature>
<feature type="helix" evidence="2">
    <location>
        <begin position="380"/>
        <end position="382"/>
    </location>
</feature>
<feature type="helix" evidence="2">
    <location>
        <begin position="386"/>
        <end position="394"/>
    </location>
</feature>
<feature type="helix" evidence="2">
    <location>
        <begin position="396"/>
        <end position="400"/>
    </location>
</feature>
<feature type="helix" evidence="2">
    <location>
        <begin position="405"/>
        <end position="416"/>
    </location>
</feature>
<feature type="helix" evidence="2">
    <location>
        <begin position="419"/>
        <end position="421"/>
    </location>
</feature>
<feature type="helix" evidence="2">
    <location>
        <begin position="422"/>
        <end position="437"/>
    </location>
</feature>
<feature type="helix" evidence="2">
    <location>
        <begin position="444"/>
        <end position="455"/>
    </location>
</feature>
<name>CLCA_SHISS</name>
<dbReference type="EMBL" id="CP000038">
    <property type="protein sequence ID" value="AAZ86960.1"/>
    <property type="molecule type" value="Genomic_DNA"/>
</dbReference>
<dbReference type="RefSeq" id="WP_000845394.1">
    <property type="nucleotide sequence ID" value="NC_007384.1"/>
</dbReference>
<dbReference type="PDB" id="4FG6">
    <property type="method" value="X-ray"/>
    <property type="resolution" value="3.02 A"/>
    <property type="chains" value="A/B=1-465"/>
</dbReference>
<dbReference type="PDBsum" id="4FG6"/>
<dbReference type="SMR" id="Q3Z5K2"/>
<dbReference type="DIP" id="DIP-60056N"/>
<dbReference type="GeneID" id="93777272"/>
<dbReference type="KEGG" id="ssn:SSON_0167"/>
<dbReference type="HOGENOM" id="CLU_015263_7_0_6"/>
<dbReference type="Proteomes" id="UP000002529">
    <property type="component" value="Chromosome"/>
</dbReference>
<dbReference type="GO" id="GO:0005886">
    <property type="term" value="C:plasma membrane"/>
    <property type="evidence" value="ECO:0007669"/>
    <property type="project" value="UniProtKB-SubCell"/>
</dbReference>
<dbReference type="GO" id="GO:0015297">
    <property type="term" value="F:antiporter activity"/>
    <property type="evidence" value="ECO:0007669"/>
    <property type="project" value="UniProtKB-UniRule"/>
</dbReference>
<dbReference type="GO" id="GO:0005247">
    <property type="term" value="F:voltage-gated chloride channel activity"/>
    <property type="evidence" value="ECO:0007669"/>
    <property type="project" value="TreeGrafter"/>
</dbReference>
<dbReference type="CDD" id="cd01031">
    <property type="entry name" value="EriC"/>
    <property type="match status" value="1"/>
</dbReference>
<dbReference type="FunFam" id="1.10.3080.10:FF:000005">
    <property type="entry name" value="H(+)/Cl(-) exchange transporter ClcA"/>
    <property type="match status" value="1"/>
</dbReference>
<dbReference type="Gene3D" id="1.10.3080.10">
    <property type="entry name" value="Clc chloride channel"/>
    <property type="match status" value="1"/>
</dbReference>
<dbReference type="HAMAP" id="MF_01128">
    <property type="entry name" value="CLC_ClcA"/>
    <property type="match status" value="1"/>
</dbReference>
<dbReference type="InterPro" id="IPR023861">
    <property type="entry name" value="Cl-channel_ClcA"/>
</dbReference>
<dbReference type="InterPro" id="IPR014743">
    <property type="entry name" value="Cl-channel_core"/>
</dbReference>
<dbReference type="InterPro" id="IPR001807">
    <property type="entry name" value="ClC"/>
</dbReference>
<dbReference type="NCBIfam" id="NF003640">
    <property type="entry name" value="PRK05277.1"/>
    <property type="match status" value="1"/>
</dbReference>
<dbReference type="PANTHER" id="PTHR45711">
    <property type="entry name" value="CHLORIDE CHANNEL PROTEIN"/>
    <property type="match status" value="1"/>
</dbReference>
<dbReference type="PANTHER" id="PTHR45711:SF6">
    <property type="entry name" value="CHLORIDE CHANNEL PROTEIN"/>
    <property type="match status" value="1"/>
</dbReference>
<dbReference type="Pfam" id="PF00654">
    <property type="entry name" value="Voltage_CLC"/>
    <property type="match status" value="1"/>
</dbReference>
<dbReference type="PRINTS" id="PR00762">
    <property type="entry name" value="CLCHANNEL"/>
</dbReference>
<dbReference type="SUPFAM" id="SSF81340">
    <property type="entry name" value="Clc chloride channel"/>
    <property type="match status" value="1"/>
</dbReference>
<protein>
    <recommendedName>
        <fullName evidence="1">H(+)/Cl(-) exchange transporter ClcA</fullName>
    </recommendedName>
</protein>